<comment type="function">
    <text evidence="1">Catalyzes the depolymerization of alginate by cleaving the beta-1,4 glycosidic bond between two adjacent sugar residues via a beta-elimination mechanism. May serve to degrade mislocalized alginate that is trapped in the periplasmic space.</text>
</comment>
<comment type="catalytic activity">
    <reaction evidence="1">
        <text>Eliminative cleavage of alginate to give oligosaccharides with 4-deoxy-alpha-L-erythro-hex-4-enuronosyl groups at their non-reducing ends and beta-D-mannuronate at their reducing end.</text>
        <dbReference type="EC" id="4.2.2.3"/>
    </reaction>
</comment>
<comment type="subcellular location">
    <subcellularLocation>
        <location evidence="1">Periplasm</location>
    </subcellularLocation>
</comment>
<comment type="similarity">
    <text evidence="1">Belongs to the polysaccharide lyase 5 family.</text>
</comment>
<keyword id="KW-0456">Lyase</keyword>
<keyword id="KW-0574">Periplasm</keyword>
<keyword id="KW-1185">Reference proteome</keyword>
<keyword id="KW-0732">Signal</keyword>
<organism>
    <name type="scientific">Pseudomonas syringae pv. tomato (strain ATCC BAA-871 / DC3000)</name>
    <dbReference type="NCBI Taxonomy" id="223283"/>
    <lineage>
        <taxon>Bacteria</taxon>
        <taxon>Pseudomonadati</taxon>
        <taxon>Pseudomonadota</taxon>
        <taxon>Gammaproteobacteria</taxon>
        <taxon>Pseudomonadales</taxon>
        <taxon>Pseudomonadaceae</taxon>
        <taxon>Pseudomonas</taxon>
    </lineage>
</organism>
<dbReference type="EC" id="4.2.2.3" evidence="1"/>
<dbReference type="EMBL" id="AE016853">
    <property type="protein sequence ID" value="AAO54761.1"/>
    <property type="molecule type" value="Genomic_DNA"/>
</dbReference>
<dbReference type="RefSeq" id="NP_791066.1">
    <property type="nucleotide sequence ID" value="NC_004578.1"/>
</dbReference>
<dbReference type="RefSeq" id="WP_011103481.1">
    <property type="nucleotide sequence ID" value="NC_004578.1"/>
</dbReference>
<dbReference type="SMR" id="Q887Q5"/>
<dbReference type="STRING" id="223283.PSPTO_1236"/>
<dbReference type="CAZy" id="PL5">
    <property type="family name" value="Polysaccharide Lyase Family 5"/>
</dbReference>
<dbReference type="GeneID" id="1182872"/>
<dbReference type="KEGG" id="pst:PSPTO_1236"/>
<dbReference type="PATRIC" id="fig|223283.9.peg.1257"/>
<dbReference type="eggNOG" id="ENOG502ZAMJ">
    <property type="taxonomic scope" value="Bacteria"/>
</dbReference>
<dbReference type="HOGENOM" id="CLU_064286_0_0_6"/>
<dbReference type="OrthoDB" id="6972889at2"/>
<dbReference type="PhylomeDB" id="Q887Q5"/>
<dbReference type="Proteomes" id="UP000002515">
    <property type="component" value="Chromosome"/>
</dbReference>
<dbReference type="GO" id="GO:0042597">
    <property type="term" value="C:periplasmic space"/>
    <property type="evidence" value="ECO:0007669"/>
    <property type="project" value="UniProtKB-SubCell"/>
</dbReference>
<dbReference type="GO" id="GO:0045135">
    <property type="term" value="F:poly(beta-D-mannuronate) lyase activity"/>
    <property type="evidence" value="ECO:0007669"/>
    <property type="project" value="UniProtKB-UniRule"/>
</dbReference>
<dbReference type="GO" id="GO:0042122">
    <property type="term" value="P:alginic acid catabolic process"/>
    <property type="evidence" value="ECO:0007669"/>
    <property type="project" value="UniProtKB-UniRule"/>
</dbReference>
<dbReference type="CDD" id="cd00244">
    <property type="entry name" value="AlgLyase"/>
    <property type="match status" value="1"/>
</dbReference>
<dbReference type="Gene3D" id="1.50.10.100">
    <property type="entry name" value="Chondroitin AC/alginate lyase"/>
    <property type="match status" value="1"/>
</dbReference>
<dbReference type="HAMAP" id="MF_00557">
    <property type="entry name" value="Alginate_lyase"/>
    <property type="match status" value="1"/>
</dbReference>
<dbReference type="InterPro" id="IPR022859">
    <property type="entry name" value="Alginate_lyase"/>
</dbReference>
<dbReference type="InterPro" id="IPR008397">
    <property type="entry name" value="Alginate_lyase_dom"/>
</dbReference>
<dbReference type="InterPro" id="IPR008929">
    <property type="entry name" value="Chondroitin_lyas"/>
</dbReference>
<dbReference type="NCBIfam" id="NF001467">
    <property type="entry name" value="PRK00325.1-2"/>
    <property type="match status" value="1"/>
</dbReference>
<dbReference type="NCBIfam" id="NF001468">
    <property type="entry name" value="PRK00325.1-3"/>
    <property type="match status" value="1"/>
</dbReference>
<dbReference type="Pfam" id="PF05426">
    <property type="entry name" value="Alginate_lyase"/>
    <property type="match status" value="1"/>
</dbReference>
<dbReference type="SUPFAM" id="SSF48230">
    <property type="entry name" value="Chondroitin AC/alginate lyase"/>
    <property type="match status" value="1"/>
</dbReference>
<evidence type="ECO:0000255" key="1">
    <source>
        <dbReference type="HAMAP-Rule" id="MF_00557"/>
    </source>
</evidence>
<reference key="1">
    <citation type="journal article" date="2003" name="Proc. Natl. Acad. Sci. U.S.A.">
        <title>The complete genome sequence of the Arabidopsis and tomato pathogen Pseudomonas syringae pv. tomato DC3000.</title>
        <authorList>
            <person name="Buell C.R."/>
            <person name="Joardar V."/>
            <person name="Lindeberg M."/>
            <person name="Selengut J."/>
            <person name="Paulsen I.T."/>
            <person name="Gwinn M.L."/>
            <person name="Dodson R.J."/>
            <person name="DeBoy R.T."/>
            <person name="Durkin A.S."/>
            <person name="Kolonay J.F."/>
            <person name="Madupu R."/>
            <person name="Daugherty S.C."/>
            <person name="Brinkac L.M."/>
            <person name="Beanan M.J."/>
            <person name="Haft D.H."/>
            <person name="Nelson W.C."/>
            <person name="Davidsen T.M."/>
            <person name="Zafar N."/>
            <person name="Zhou L."/>
            <person name="Liu J."/>
            <person name="Yuan Q."/>
            <person name="Khouri H.M."/>
            <person name="Fedorova N.B."/>
            <person name="Tran B."/>
            <person name="Russell D."/>
            <person name="Berry K.J."/>
            <person name="Utterback T.R."/>
            <person name="Van Aken S.E."/>
            <person name="Feldblyum T.V."/>
            <person name="D'Ascenzo M."/>
            <person name="Deng W.-L."/>
            <person name="Ramos A.R."/>
            <person name="Alfano J.R."/>
            <person name="Cartinhour S."/>
            <person name="Chatterjee A.K."/>
            <person name="Delaney T.P."/>
            <person name="Lazarowitz S.G."/>
            <person name="Martin G.B."/>
            <person name="Schneider D.J."/>
            <person name="Tang X."/>
            <person name="Bender C.L."/>
            <person name="White O."/>
            <person name="Fraser C.M."/>
            <person name="Collmer A."/>
        </authorList>
    </citation>
    <scope>NUCLEOTIDE SEQUENCE [LARGE SCALE GENOMIC DNA]</scope>
    <source>
        <strain>ATCC BAA-871 / DC3000</strain>
    </source>
</reference>
<protein>
    <recommendedName>
        <fullName evidence="1">Alginate lyase</fullName>
        <ecNumber evidence="1">4.2.2.3</ecNumber>
    </recommendedName>
    <alternativeName>
        <fullName evidence="1">Poly(beta-D-mannuronate) lyase</fullName>
    </alternativeName>
</protein>
<gene>
    <name evidence="1" type="primary">algL</name>
    <name type="ordered locus">PSPTO_1236</name>
</gene>
<name>ALGL_PSESM</name>
<feature type="signal peptide" evidence="1">
    <location>
        <begin position="1"/>
        <end position="28"/>
    </location>
</feature>
<feature type="chain" id="PRO_0000024921" description="Alginate lyase">
    <location>
        <begin position="29"/>
        <end position="378"/>
    </location>
</feature>
<feature type="binding site" evidence="1">
    <location>
        <begin position="67"/>
        <end position="68"/>
    </location>
    <ligand>
        <name>substrate</name>
    </ligand>
</feature>
<feature type="binding site" evidence="1">
    <location>
        <begin position="140"/>
        <end position="141"/>
    </location>
    <ligand>
        <name>substrate</name>
    </ligand>
</feature>
<feature type="binding site" evidence="1">
    <location>
        <position position="258"/>
    </location>
    <ligand>
        <name>substrate</name>
    </ligand>
</feature>
<accession>Q887Q5</accession>
<sequence length="378" mass="42486">MQTPKLIRPTLLSMAIVSSMAWATGASAALVPPKGYDAPIEKMKTGDHNFTCEAIPKPYTDKLVFRSKYEGSDKARATLNAVSEEAFRDATKDITTLERGVSKVVMQYMRDGRPEQLDCALNMMTTWAKADALESREFNHTGKSMRKWALGSMSSAYLRLKFSDSHPLANRQQDAQIIEAWFSKLADQVVSDWSNLPLEKINNHSYWAAWSVMSTAVVTNRKDLFDWAVKEFKVAANQVDKDGYLPNEMKRRQRALSYHNYALPPLAMIASFAQANGVDLRPENNGALKRLGDRVLAGVKDPASFAEHNGEKQDMTDLKKDPKFAWLEPYCSLYTCSPDVLEDKHEKQPFKTFRLGGDLTKVYDPTHEKGDKGDNDGS</sequence>
<proteinExistence type="inferred from homology"/>